<keyword id="KW-0028">Amino-acid biosynthesis</keyword>
<keyword id="KW-0963">Cytoplasm</keyword>
<keyword id="KW-0368">Histidine biosynthesis</keyword>
<keyword id="KW-0378">Hydrolase</keyword>
<keyword id="KW-0456">Lyase</keyword>
<keyword id="KW-0460">Magnesium</keyword>
<keyword id="KW-0479">Metal-binding</keyword>
<keyword id="KW-0511">Multifunctional enzyme</keyword>
<keyword id="KW-1185">Reference proteome</keyword>
<organism>
    <name type="scientific">Stenotrophomonas maltophilia (strain K279a)</name>
    <dbReference type="NCBI Taxonomy" id="522373"/>
    <lineage>
        <taxon>Bacteria</taxon>
        <taxon>Pseudomonadati</taxon>
        <taxon>Pseudomonadota</taxon>
        <taxon>Gammaproteobacteria</taxon>
        <taxon>Lysobacterales</taxon>
        <taxon>Lysobacteraceae</taxon>
        <taxon>Stenotrophomonas</taxon>
        <taxon>Stenotrophomonas maltophilia group</taxon>
    </lineage>
</organism>
<gene>
    <name evidence="1" type="primary">hisB</name>
    <name type="ordered locus">Smlt2165</name>
</gene>
<accession>B2FPM1</accession>
<reference key="1">
    <citation type="journal article" date="2008" name="Genome Biol.">
        <title>The complete genome, comparative and functional analysis of Stenotrophomonas maltophilia reveals an organism heavily shielded by drug resistance determinants.</title>
        <authorList>
            <person name="Crossman L.C."/>
            <person name="Gould V.C."/>
            <person name="Dow J.M."/>
            <person name="Vernikos G.S."/>
            <person name="Okazaki A."/>
            <person name="Sebaihia M."/>
            <person name="Saunders D."/>
            <person name="Arrowsmith C."/>
            <person name="Carver T."/>
            <person name="Peters N."/>
            <person name="Adlem E."/>
            <person name="Kerhornou A."/>
            <person name="Lord A."/>
            <person name="Murphy L."/>
            <person name="Seeger K."/>
            <person name="Squares R."/>
            <person name="Rutter S."/>
            <person name="Quail M.A."/>
            <person name="Rajandream M.A."/>
            <person name="Harris D."/>
            <person name="Churcher C."/>
            <person name="Bentley S.D."/>
            <person name="Parkhill J."/>
            <person name="Thomson N.R."/>
            <person name="Avison M.B."/>
        </authorList>
    </citation>
    <scope>NUCLEOTIDE SEQUENCE [LARGE SCALE GENOMIC DNA]</scope>
    <source>
        <strain>K279a</strain>
    </source>
</reference>
<protein>
    <recommendedName>
        <fullName evidence="1">Histidine biosynthesis bifunctional protein HisB</fullName>
    </recommendedName>
    <domain>
        <recommendedName>
            <fullName evidence="1">Histidinol-phosphatase</fullName>
            <ecNumber evidence="1">3.1.3.15</ecNumber>
        </recommendedName>
    </domain>
    <domain>
        <recommendedName>
            <fullName evidence="1">Imidazoleglycerol-phosphate dehydratase</fullName>
            <shortName evidence="1">IGPD</shortName>
            <ecNumber evidence="1">4.2.1.19</ecNumber>
        </recommendedName>
    </domain>
</protein>
<proteinExistence type="inferred from homology"/>
<feature type="chain" id="PRO_1000135371" description="Histidine biosynthesis bifunctional protein HisB">
    <location>
        <begin position="1"/>
        <end position="357"/>
    </location>
</feature>
<feature type="region of interest" description="Histidinol-phosphatase" evidence="1">
    <location>
        <begin position="1"/>
        <end position="168"/>
    </location>
</feature>
<feature type="region of interest" description="Imidazoleglycerol-phosphate dehydratase" evidence="1">
    <location>
        <begin position="169"/>
        <end position="357"/>
    </location>
</feature>
<feature type="active site" description="Nucleophile" evidence="1">
    <location>
        <position position="8"/>
    </location>
</feature>
<feature type="active site" description="Proton donor" evidence="1">
    <location>
        <position position="10"/>
    </location>
</feature>
<feature type="binding site" evidence="1">
    <location>
        <position position="8"/>
    </location>
    <ligand>
        <name>Mg(2+)</name>
        <dbReference type="ChEBI" id="CHEBI:18420"/>
    </ligand>
</feature>
<feature type="binding site" evidence="1">
    <location>
        <position position="10"/>
    </location>
    <ligand>
        <name>Mg(2+)</name>
        <dbReference type="ChEBI" id="CHEBI:18420"/>
    </ligand>
</feature>
<feature type="binding site" evidence="1">
    <location>
        <position position="128"/>
    </location>
    <ligand>
        <name>Mg(2+)</name>
        <dbReference type="ChEBI" id="CHEBI:18420"/>
    </ligand>
</feature>
<sequence>MTPILFIDRDGTLIEEPSDFQIDAYEKLRFVPQVIPALLKLRDAGYQFVIVTNQDGLGSDSYPRASFDGPNELMLQIFESQGITFRDVLIDCSWPQDNAPTRKPGIGLMTAYLQDRSIDWARSGMVGDRITDLQFADNLNIRGFQLRTAQFGGQWDWPGIAHALADAPRTAVVQRDTKETKIRVELDLDRAADAHISTGLPFFDHMLEQIGKHGGFALDIQAEGDLHIDEHHTIEDTGLALGQALREALGDKRGIGRYGFTLPMDETLASAALDFSGRPYFVFEGEFKRERVGDMPTELVPHFFRSLCDASGLNLNLQVRGDNDHHKVEACFKALARALRPALARQGTALPSTKGAL</sequence>
<comment type="catalytic activity">
    <reaction evidence="1">
        <text>D-erythro-1-(imidazol-4-yl)glycerol 3-phosphate = 3-(imidazol-4-yl)-2-oxopropyl phosphate + H2O</text>
        <dbReference type="Rhea" id="RHEA:11040"/>
        <dbReference type="ChEBI" id="CHEBI:15377"/>
        <dbReference type="ChEBI" id="CHEBI:57766"/>
        <dbReference type="ChEBI" id="CHEBI:58278"/>
        <dbReference type="EC" id="4.2.1.19"/>
    </reaction>
</comment>
<comment type="catalytic activity">
    <reaction evidence="1">
        <text>L-histidinol phosphate + H2O = L-histidinol + phosphate</text>
        <dbReference type="Rhea" id="RHEA:14465"/>
        <dbReference type="ChEBI" id="CHEBI:15377"/>
        <dbReference type="ChEBI" id="CHEBI:43474"/>
        <dbReference type="ChEBI" id="CHEBI:57699"/>
        <dbReference type="ChEBI" id="CHEBI:57980"/>
        <dbReference type="EC" id="3.1.3.15"/>
    </reaction>
</comment>
<comment type="cofactor">
    <cofactor evidence="1">
        <name>Mg(2+)</name>
        <dbReference type="ChEBI" id="CHEBI:18420"/>
    </cofactor>
</comment>
<comment type="pathway">
    <text evidence="1">Amino-acid biosynthesis; L-histidine biosynthesis; L-histidine from 5-phospho-alpha-D-ribose 1-diphosphate: step 6/9.</text>
</comment>
<comment type="pathway">
    <text evidence="1">Amino-acid biosynthesis; L-histidine biosynthesis; L-histidine from 5-phospho-alpha-D-ribose 1-diphosphate: step 8/9.</text>
</comment>
<comment type="subcellular location">
    <subcellularLocation>
        <location evidence="1">Cytoplasm</location>
    </subcellularLocation>
</comment>
<comment type="similarity">
    <text evidence="1">In the N-terminal section; belongs to the histidinol-phosphatase family.</text>
</comment>
<comment type="similarity">
    <text evidence="1">In the C-terminal section; belongs to the imidazoleglycerol-phosphate dehydratase family.</text>
</comment>
<evidence type="ECO:0000255" key="1">
    <source>
        <dbReference type="HAMAP-Rule" id="MF_01022"/>
    </source>
</evidence>
<name>HIS7_STRMK</name>
<dbReference type="EC" id="3.1.3.15" evidence="1"/>
<dbReference type="EC" id="4.2.1.19" evidence="1"/>
<dbReference type="EMBL" id="AM743169">
    <property type="protein sequence ID" value="CAQ45664.1"/>
    <property type="molecule type" value="Genomic_DNA"/>
</dbReference>
<dbReference type="RefSeq" id="WP_012480033.1">
    <property type="nucleotide sequence ID" value="NC_010943.1"/>
</dbReference>
<dbReference type="SMR" id="B2FPM1"/>
<dbReference type="EnsemblBacteria" id="CAQ45664">
    <property type="protein sequence ID" value="CAQ45664"/>
    <property type="gene ID" value="Smlt2165"/>
</dbReference>
<dbReference type="KEGG" id="sml:Smlt2165"/>
<dbReference type="PATRIC" id="fig|522373.3.peg.2058"/>
<dbReference type="eggNOG" id="COG0131">
    <property type="taxonomic scope" value="Bacteria"/>
</dbReference>
<dbReference type="eggNOG" id="COG0241">
    <property type="taxonomic scope" value="Bacteria"/>
</dbReference>
<dbReference type="HOGENOM" id="CLU_044308_0_0_6"/>
<dbReference type="UniPathway" id="UPA00031">
    <property type="reaction ID" value="UER00011"/>
</dbReference>
<dbReference type="UniPathway" id="UPA00031">
    <property type="reaction ID" value="UER00013"/>
</dbReference>
<dbReference type="Proteomes" id="UP000008840">
    <property type="component" value="Chromosome"/>
</dbReference>
<dbReference type="GO" id="GO:0005737">
    <property type="term" value="C:cytoplasm"/>
    <property type="evidence" value="ECO:0007669"/>
    <property type="project" value="UniProtKB-SubCell"/>
</dbReference>
<dbReference type="GO" id="GO:0004401">
    <property type="term" value="F:histidinol-phosphatase activity"/>
    <property type="evidence" value="ECO:0007669"/>
    <property type="project" value="UniProtKB-UniRule"/>
</dbReference>
<dbReference type="GO" id="GO:0004424">
    <property type="term" value="F:imidazoleglycerol-phosphate dehydratase activity"/>
    <property type="evidence" value="ECO:0007669"/>
    <property type="project" value="UniProtKB-UniRule"/>
</dbReference>
<dbReference type="GO" id="GO:0046872">
    <property type="term" value="F:metal ion binding"/>
    <property type="evidence" value="ECO:0007669"/>
    <property type="project" value="UniProtKB-KW"/>
</dbReference>
<dbReference type="GO" id="GO:0000105">
    <property type="term" value="P:L-histidine biosynthetic process"/>
    <property type="evidence" value="ECO:0007669"/>
    <property type="project" value="UniProtKB-UniRule"/>
</dbReference>
<dbReference type="CDD" id="cd07914">
    <property type="entry name" value="IGPD"/>
    <property type="match status" value="1"/>
</dbReference>
<dbReference type="FunFam" id="3.30.230.40:FF:000001">
    <property type="entry name" value="Imidazoleglycerol-phosphate dehydratase HisB"/>
    <property type="match status" value="1"/>
</dbReference>
<dbReference type="FunFam" id="3.30.230.40:FF:000003">
    <property type="entry name" value="Imidazoleglycerol-phosphate dehydratase HisB"/>
    <property type="match status" value="1"/>
</dbReference>
<dbReference type="Gene3D" id="3.40.50.1000">
    <property type="entry name" value="HAD superfamily/HAD-like"/>
    <property type="match status" value="1"/>
</dbReference>
<dbReference type="Gene3D" id="3.30.230.40">
    <property type="entry name" value="Imidazole glycerol phosphate dehydratase, domain 1"/>
    <property type="match status" value="2"/>
</dbReference>
<dbReference type="HAMAP" id="MF_01022">
    <property type="entry name" value="Bifunc_HisB"/>
    <property type="match status" value="1"/>
</dbReference>
<dbReference type="HAMAP" id="MF_00076">
    <property type="entry name" value="HisB"/>
    <property type="match status" value="1"/>
</dbReference>
<dbReference type="InterPro" id="IPR036412">
    <property type="entry name" value="HAD-like_sf"/>
</dbReference>
<dbReference type="InterPro" id="IPR006549">
    <property type="entry name" value="HAD-SF_hydro_IIIA"/>
</dbReference>
<dbReference type="InterPro" id="IPR023214">
    <property type="entry name" value="HAD_sf"/>
</dbReference>
<dbReference type="InterPro" id="IPR020566">
    <property type="entry name" value="His_synth_bifunc_HisB"/>
</dbReference>
<dbReference type="InterPro" id="IPR005954">
    <property type="entry name" value="HisB_N"/>
</dbReference>
<dbReference type="InterPro" id="IPR006543">
    <property type="entry name" value="Histidinol-phos"/>
</dbReference>
<dbReference type="InterPro" id="IPR038494">
    <property type="entry name" value="IGPD_sf"/>
</dbReference>
<dbReference type="InterPro" id="IPR000807">
    <property type="entry name" value="ImidazoleglycerolP_deHydtase"/>
</dbReference>
<dbReference type="InterPro" id="IPR020565">
    <property type="entry name" value="ImidazoleglycerP_deHydtase_CS"/>
</dbReference>
<dbReference type="InterPro" id="IPR013954">
    <property type="entry name" value="PNK3P"/>
</dbReference>
<dbReference type="InterPro" id="IPR020568">
    <property type="entry name" value="Ribosomal_Su5_D2-typ_SF"/>
</dbReference>
<dbReference type="NCBIfam" id="TIGR01662">
    <property type="entry name" value="HAD-SF-IIIA"/>
    <property type="match status" value="1"/>
</dbReference>
<dbReference type="NCBIfam" id="TIGR01261">
    <property type="entry name" value="hisB_Nterm"/>
    <property type="match status" value="1"/>
</dbReference>
<dbReference type="NCBIfam" id="TIGR01656">
    <property type="entry name" value="Histidinol-ppas"/>
    <property type="match status" value="1"/>
</dbReference>
<dbReference type="NCBIfam" id="NF002111">
    <property type="entry name" value="PRK00951.2-1"/>
    <property type="match status" value="1"/>
</dbReference>
<dbReference type="NCBIfam" id="NF002114">
    <property type="entry name" value="PRK00951.2-4"/>
    <property type="match status" value="1"/>
</dbReference>
<dbReference type="NCBIfam" id="NF003937">
    <property type="entry name" value="PRK05446.1"/>
    <property type="match status" value="1"/>
</dbReference>
<dbReference type="PANTHER" id="PTHR23133:SF2">
    <property type="entry name" value="IMIDAZOLEGLYCEROL-PHOSPHATE DEHYDRATASE"/>
    <property type="match status" value="1"/>
</dbReference>
<dbReference type="PANTHER" id="PTHR23133">
    <property type="entry name" value="IMIDAZOLEGLYCEROL-PHOSPHATE DEHYDRATASE HIS7"/>
    <property type="match status" value="1"/>
</dbReference>
<dbReference type="Pfam" id="PF00475">
    <property type="entry name" value="IGPD"/>
    <property type="match status" value="1"/>
</dbReference>
<dbReference type="Pfam" id="PF08645">
    <property type="entry name" value="PNK3P"/>
    <property type="match status" value="1"/>
</dbReference>
<dbReference type="SUPFAM" id="SSF56784">
    <property type="entry name" value="HAD-like"/>
    <property type="match status" value="1"/>
</dbReference>
<dbReference type="SUPFAM" id="SSF54211">
    <property type="entry name" value="Ribosomal protein S5 domain 2-like"/>
    <property type="match status" value="2"/>
</dbReference>
<dbReference type="PROSITE" id="PS00954">
    <property type="entry name" value="IGP_DEHYDRATASE_1"/>
    <property type="match status" value="1"/>
</dbReference>
<dbReference type="PROSITE" id="PS00955">
    <property type="entry name" value="IGP_DEHYDRATASE_2"/>
    <property type="match status" value="1"/>
</dbReference>